<dbReference type="EMBL" id="CP001138">
    <property type="protein sequence ID" value="ACH52586.1"/>
    <property type="molecule type" value="Genomic_DNA"/>
</dbReference>
<dbReference type="RefSeq" id="WP_000406446.1">
    <property type="nucleotide sequence ID" value="NC_011149.1"/>
</dbReference>
<dbReference type="SMR" id="B5F4E1"/>
<dbReference type="KEGG" id="sea:SeAg_B1327"/>
<dbReference type="HOGENOM" id="CLU_041110_0_0_6"/>
<dbReference type="Proteomes" id="UP000008819">
    <property type="component" value="Chromosome"/>
</dbReference>
<dbReference type="GO" id="GO:0005886">
    <property type="term" value="C:plasma membrane"/>
    <property type="evidence" value="ECO:0007669"/>
    <property type="project" value="UniProtKB-SubCell"/>
</dbReference>
<dbReference type="GO" id="GO:0015385">
    <property type="term" value="F:sodium:proton antiporter activity"/>
    <property type="evidence" value="ECO:0007669"/>
    <property type="project" value="InterPro"/>
</dbReference>
<dbReference type="HAMAP" id="MF_01599">
    <property type="entry name" value="NhaB"/>
    <property type="match status" value="1"/>
</dbReference>
<dbReference type="InterPro" id="IPR004671">
    <property type="entry name" value="Na+/H+_antiporter_NhaB"/>
</dbReference>
<dbReference type="NCBIfam" id="TIGR00774">
    <property type="entry name" value="NhaB"/>
    <property type="match status" value="1"/>
</dbReference>
<dbReference type="NCBIfam" id="NF007093">
    <property type="entry name" value="PRK09547.1"/>
    <property type="match status" value="1"/>
</dbReference>
<dbReference type="PANTHER" id="PTHR43302:SF1">
    <property type="entry name" value="NA(+)_H(+) ANTIPORTER NHAB"/>
    <property type="match status" value="1"/>
</dbReference>
<dbReference type="PANTHER" id="PTHR43302">
    <property type="entry name" value="TRANSPORTER ARSB-RELATED"/>
    <property type="match status" value="1"/>
</dbReference>
<dbReference type="Pfam" id="PF06450">
    <property type="entry name" value="NhaB"/>
    <property type="match status" value="1"/>
</dbReference>
<evidence type="ECO:0000255" key="1">
    <source>
        <dbReference type="HAMAP-Rule" id="MF_01599"/>
    </source>
</evidence>
<sequence length="514" mass="56512">MEISWGRAMWRNFLGQSPDWYKLALLVFLIVNPFIFLANPFVAGWLLVAEFIFTLAMALKCYPLLPGGLLAIEAVIIGMTSAAHVREEVAANLEVLLLLMFMVAGIYFMKQLLLFIFTRLLLSIRSKMVLSLAFCVAAAFLSAFLDALTVVAVVISVAVGFYGIYHRVASSRGEENDMLDDSHIDPHYKTVLEQFRGFLRSLMMHAGVGTALGGVMTMVGEPQNLIIAKAAGWHFGDFFLRMSPVTVPVLVCGLLTCMLVEKMRWFGYGETLPEKVRDVLQQFDDQSRKKRTRQDKIKLIVQAVIGVWLVTALALHLAEVGLIGLSVIILATALTGVTDEHAIGKAFTESLPFTALLTVFFSIVAVIIDQHLFAPIIQFVLQASEHAQLTLFYLFNGLLSSISDNVFVGTIYINEAKAAMENGAISLKQFELLAVAINTGTNLPSVATPNGQAAFLFLLTSALAPLIRLSYGRMVWMALPYTIVLTLIGLLCVEFTLAPATEWMTQAGWLATLS</sequence>
<protein>
    <recommendedName>
        <fullName evidence="1">Na(+)/H(+) antiporter NhaB</fullName>
    </recommendedName>
    <alternativeName>
        <fullName evidence="1">Sodium/proton antiporter NhaB</fullName>
    </alternativeName>
</protein>
<proteinExistence type="inferred from homology"/>
<keyword id="KW-0050">Antiport</keyword>
<keyword id="KW-0997">Cell inner membrane</keyword>
<keyword id="KW-1003">Cell membrane</keyword>
<keyword id="KW-0406">Ion transport</keyword>
<keyword id="KW-0472">Membrane</keyword>
<keyword id="KW-0915">Sodium</keyword>
<keyword id="KW-0739">Sodium transport</keyword>
<keyword id="KW-0812">Transmembrane</keyword>
<keyword id="KW-1133">Transmembrane helix</keyword>
<keyword id="KW-0813">Transport</keyword>
<reference key="1">
    <citation type="journal article" date="2011" name="J. Bacteriol.">
        <title>Comparative genomics of 28 Salmonella enterica isolates: evidence for CRISPR-mediated adaptive sublineage evolution.</title>
        <authorList>
            <person name="Fricke W.F."/>
            <person name="Mammel M.K."/>
            <person name="McDermott P.F."/>
            <person name="Tartera C."/>
            <person name="White D.G."/>
            <person name="Leclerc J.E."/>
            <person name="Ravel J."/>
            <person name="Cebula T.A."/>
        </authorList>
    </citation>
    <scope>NUCLEOTIDE SEQUENCE [LARGE SCALE GENOMIC DNA]</scope>
    <source>
        <strain>SL483</strain>
    </source>
</reference>
<feature type="chain" id="PRO_1000148044" description="Na(+)/H(+) antiporter NhaB">
    <location>
        <begin position="1"/>
        <end position="514"/>
    </location>
</feature>
<feature type="transmembrane region" description="Helical" evidence="1">
    <location>
        <begin position="23"/>
        <end position="43"/>
    </location>
</feature>
<feature type="transmembrane region" description="Helical" evidence="1">
    <location>
        <begin position="63"/>
        <end position="83"/>
    </location>
</feature>
<feature type="transmembrane region" description="Helical" evidence="1">
    <location>
        <begin position="97"/>
        <end position="117"/>
    </location>
</feature>
<feature type="transmembrane region" description="Helical" evidence="1">
    <location>
        <begin position="120"/>
        <end position="140"/>
    </location>
</feature>
<feature type="transmembrane region" description="Helical" evidence="1">
    <location>
        <begin position="144"/>
        <end position="164"/>
    </location>
</feature>
<feature type="transmembrane region" description="Helical" evidence="1">
    <location>
        <begin position="202"/>
        <end position="222"/>
    </location>
</feature>
<feature type="transmembrane region" description="Helical" evidence="1">
    <location>
        <begin position="238"/>
        <end position="258"/>
    </location>
</feature>
<feature type="transmembrane region" description="Helical" evidence="1">
    <location>
        <begin position="303"/>
        <end position="323"/>
    </location>
</feature>
<feature type="transmembrane region" description="Helical" evidence="1">
    <location>
        <begin position="357"/>
        <end position="377"/>
    </location>
</feature>
<feature type="transmembrane region" description="Helical" evidence="1">
    <location>
        <begin position="391"/>
        <end position="411"/>
    </location>
</feature>
<feature type="transmembrane region" description="Helical" evidence="1">
    <location>
        <begin position="447"/>
        <end position="467"/>
    </location>
</feature>
<feature type="transmembrane region" description="Helical" evidence="1">
    <location>
        <begin position="475"/>
        <end position="495"/>
    </location>
</feature>
<gene>
    <name evidence="1" type="primary">nhaB</name>
    <name type="ordered locus">SeAg_B1327</name>
</gene>
<name>NHAB_SALA4</name>
<accession>B5F4E1</accession>
<organism>
    <name type="scientific">Salmonella agona (strain SL483)</name>
    <dbReference type="NCBI Taxonomy" id="454166"/>
    <lineage>
        <taxon>Bacteria</taxon>
        <taxon>Pseudomonadati</taxon>
        <taxon>Pseudomonadota</taxon>
        <taxon>Gammaproteobacteria</taxon>
        <taxon>Enterobacterales</taxon>
        <taxon>Enterobacteriaceae</taxon>
        <taxon>Salmonella</taxon>
    </lineage>
</organism>
<comment type="function">
    <text evidence="1">Na(+)/H(+) antiporter that extrudes sodium in exchange for external protons.</text>
</comment>
<comment type="catalytic activity">
    <reaction evidence="1">
        <text>2 Na(+)(in) + 3 H(+)(out) = 2 Na(+)(out) + 3 H(+)(in)</text>
        <dbReference type="Rhea" id="RHEA:29247"/>
        <dbReference type="ChEBI" id="CHEBI:15378"/>
        <dbReference type="ChEBI" id="CHEBI:29101"/>
    </reaction>
    <physiologicalReaction direction="left-to-right" evidence="1">
        <dbReference type="Rhea" id="RHEA:29248"/>
    </physiologicalReaction>
</comment>
<comment type="subcellular location">
    <subcellularLocation>
        <location evidence="1">Cell inner membrane</location>
        <topology evidence="1">Multi-pass membrane protein</topology>
    </subcellularLocation>
</comment>
<comment type="similarity">
    <text evidence="1">Belongs to the NhaB Na(+)/H(+) (TC 2.A.34) antiporter family.</text>
</comment>